<feature type="chain" id="PRO_0000124109" description="Proteasome subunit alpha type-4">
    <location>
        <begin position="1"/>
        <end position="264"/>
    </location>
</feature>
<feature type="sequence conflict" description="In Ref. 1; CAA36555." evidence="4" ref="1">
    <original>L</original>
    <variation>R</variation>
    <location>
        <position position="68"/>
    </location>
</feature>
<accession>P18053</accession>
<accession>Q9W2N9</accession>
<dbReference type="EMBL" id="X52319">
    <property type="protein sequence ID" value="CAA36555.1"/>
    <property type="molecule type" value="mRNA"/>
</dbReference>
<dbReference type="EMBL" id="AE013599">
    <property type="protein sequence ID" value="AAF46651.1"/>
    <property type="molecule type" value="Genomic_DNA"/>
</dbReference>
<dbReference type="EMBL" id="AY084140">
    <property type="protein sequence ID" value="AAL89878.1"/>
    <property type="molecule type" value="mRNA"/>
</dbReference>
<dbReference type="PIR" id="S10318">
    <property type="entry name" value="S10318"/>
</dbReference>
<dbReference type="RefSeq" id="NP_476691.1">
    <property type="nucleotide sequence ID" value="NM_057343.5"/>
</dbReference>
<dbReference type="SMR" id="P18053"/>
<dbReference type="BioGRID" id="63019">
    <property type="interactions" value="44"/>
</dbReference>
<dbReference type="ComplexPortal" id="CPX-9070">
    <property type="entry name" value="26S proteasome complex"/>
</dbReference>
<dbReference type="DIP" id="DIP-19125N"/>
<dbReference type="FunCoup" id="P18053">
    <property type="interactions" value="2093"/>
</dbReference>
<dbReference type="IntAct" id="P18053">
    <property type="interactions" value="127"/>
</dbReference>
<dbReference type="STRING" id="7227.FBpp0071451"/>
<dbReference type="MEROPS" id="T01.973"/>
<dbReference type="GlyGen" id="P18053">
    <property type="glycosylation" value="1 site, 1 O-linked glycan (1 site)"/>
</dbReference>
<dbReference type="PaxDb" id="7227-FBpp0071451"/>
<dbReference type="DNASU" id="37378"/>
<dbReference type="EnsemblMetazoa" id="FBtr0071522">
    <property type="protein sequence ID" value="FBpp0071451"/>
    <property type="gene ID" value="FBgn0261394"/>
</dbReference>
<dbReference type="GeneID" id="37378"/>
<dbReference type="KEGG" id="dme:Dmel_CG9327"/>
<dbReference type="AGR" id="FB:FBgn0261394"/>
<dbReference type="CTD" id="37378"/>
<dbReference type="FlyBase" id="FBgn0261394">
    <property type="gene designation" value="Prosalpha3"/>
</dbReference>
<dbReference type="VEuPathDB" id="VectorBase:FBgn0261394"/>
<dbReference type="eggNOG" id="KOG0178">
    <property type="taxonomic scope" value="Eukaryota"/>
</dbReference>
<dbReference type="GeneTree" id="ENSGT00550000074827"/>
<dbReference type="HOGENOM" id="CLU_035750_4_3_1"/>
<dbReference type="InParanoid" id="P18053"/>
<dbReference type="OMA" id="YVLNDNM"/>
<dbReference type="OrthoDB" id="431557at2759"/>
<dbReference type="PhylomeDB" id="P18053"/>
<dbReference type="Reactome" id="R-DME-1169091">
    <property type="pathway name" value="Activation of NF-kappaB in B cells"/>
</dbReference>
<dbReference type="Reactome" id="R-DME-1234176">
    <property type="pathway name" value="Oxygen-dependent proline hydroxylation of Hypoxia-inducible Factor Alpha"/>
</dbReference>
<dbReference type="Reactome" id="R-DME-1236978">
    <property type="pathway name" value="Cross-presentation of soluble exogenous antigens (endosomes)"/>
</dbReference>
<dbReference type="Reactome" id="R-DME-174084">
    <property type="pathway name" value="Autodegradation of Cdh1 by Cdh1:APC/C"/>
</dbReference>
<dbReference type="Reactome" id="R-DME-174154">
    <property type="pathway name" value="APC/C:Cdc20 mediated degradation of Securin"/>
</dbReference>
<dbReference type="Reactome" id="R-DME-174178">
    <property type="pathway name" value="APC/C:Cdh1 mediated degradation of Cdc20 and other APC/C:Cdh1 targeted proteins in late mitosis/early G1"/>
</dbReference>
<dbReference type="Reactome" id="R-DME-174184">
    <property type="pathway name" value="Cdc20:Phospho-APC/C mediated degradation of Cyclin A"/>
</dbReference>
<dbReference type="Reactome" id="R-DME-187577">
    <property type="pathway name" value="SCF(Skp2)-mediated degradation of p27/p21"/>
</dbReference>
<dbReference type="Reactome" id="R-DME-195253">
    <property type="pathway name" value="Degradation of beta-catenin by the destruction complex"/>
</dbReference>
<dbReference type="Reactome" id="R-DME-202424">
    <property type="pathway name" value="Downstream TCR signaling"/>
</dbReference>
<dbReference type="Reactome" id="R-DME-2467813">
    <property type="pathway name" value="Separation of Sister Chromatids"/>
</dbReference>
<dbReference type="Reactome" id="R-DME-2871837">
    <property type="pathway name" value="FCERI mediated NF-kB activation"/>
</dbReference>
<dbReference type="Reactome" id="R-DME-350562">
    <property type="pathway name" value="Regulation of ornithine decarboxylase (ODC)"/>
</dbReference>
<dbReference type="Reactome" id="R-DME-382556">
    <property type="pathway name" value="ABC-family proteins mediated transport"/>
</dbReference>
<dbReference type="Reactome" id="R-DME-450408">
    <property type="pathway name" value="AUF1 (hnRNP D0) binds and destabilizes mRNA"/>
</dbReference>
<dbReference type="Reactome" id="R-DME-4608870">
    <property type="pathway name" value="Asymmetric localization of PCP proteins"/>
</dbReference>
<dbReference type="Reactome" id="R-DME-4641257">
    <property type="pathway name" value="Degradation of AXIN"/>
</dbReference>
<dbReference type="Reactome" id="R-DME-4641258">
    <property type="pathway name" value="Degradation of DVL"/>
</dbReference>
<dbReference type="Reactome" id="R-DME-5358346">
    <property type="pathway name" value="Hedgehog ligand biogenesis"/>
</dbReference>
<dbReference type="Reactome" id="R-DME-5607761">
    <property type="pathway name" value="Dectin-1 mediated noncanonical NF-kB signaling"/>
</dbReference>
<dbReference type="Reactome" id="R-DME-5607764">
    <property type="pathway name" value="CLEC7A (Dectin-1) signaling"/>
</dbReference>
<dbReference type="Reactome" id="R-DME-5610780">
    <property type="pathway name" value="Degradation of GLI1 by the proteasome"/>
</dbReference>
<dbReference type="Reactome" id="R-DME-5610785">
    <property type="pathway name" value="GLI3 is processed to GLI3R by the proteasome"/>
</dbReference>
<dbReference type="Reactome" id="R-DME-5632684">
    <property type="pathway name" value="Hedgehog 'on' state"/>
</dbReference>
<dbReference type="Reactome" id="R-DME-5658442">
    <property type="pathway name" value="Regulation of RAS by GAPs"/>
</dbReference>
<dbReference type="Reactome" id="R-DME-5676590">
    <property type="pathway name" value="NIK--&gt;noncanonical NF-kB signaling"/>
</dbReference>
<dbReference type="Reactome" id="R-DME-5689603">
    <property type="pathway name" value="UCH proteinases"/>
</dbReference>
<dbReference type="Reactome" id="R-DME-5689880">
    <property type="pathway name" value="Ub-specific processing proteases"/>
</dbReference>
<dbReference type="Reactome" id="R-DME-68949">
    <property type="pathway name" value="Orc1 removal from chromatin"/>
</dbReference>
<dbReference type="Reactome" id="R-DME-69017">
    <property type="pathway name" value="CDK-mediated phosphorylation and removal of Cdc6"/>
</dbReference>
<dbReference type="Reactome" id="R-DME-69601">
    <property type="pathway name" value="Ubiquitin Mediated Degradation of Phosphorylated Cdc25A"/>
</dbReference>
<dbReference type="Reactome" id="R-DME-75815">
    <property type="pathway name" value="Ubiquitin-dependent degradation of Cyclin D"/>
</dbReference>
<dbReference type="Reactome" id="R-DME-8854050">
    <property type="pathway name" value="FBXL7 down-regulates AURKA during mitotic entry and in early mitosis"/>
</dbReference>
<dbReference type="Reactome" id="R-DME-8939236">
    <property type="pathway name" value="RUNX1 regulates transcription of genes involved in differentiation of HSCs"/>
</dbReference>
<dbReference type="Reactome" id="R-DME-8939902">
    <property type="pathway name" value="Regulation of RUNX2 expression and activity"/>
</dbReference>
<dbReference type="Reactome" id="R-DME-8941858">
    <property type="pathway name" value="Regulation of RUNX3 expression and activity"/>
</dbReference>
<dbReference type="Reactome" id="R-DME-8948751">
    <property type="pathway name" value="Regulation of PTEN stability and activity"/>
</dbReference>
<dbReference type="Reactome" id="R-DME-8951664">
    <property type="pathway name" value="Neddylation"/>
</dbReference>
<dbReference type="Reactome" id="R-DME-9020702">
    <property type="pathway name" value="Interleukin-1 signaling"/>
</dbReference>
<dbReference type="Reactome" id="R-DME-9755511">
    <property type="pathway name" value="KEAP1-NFE2L2 pathway"/>
</dbReference>
<dbReference type="Reactome" id="R-DME-9762114">
    <property type="pathway name" value="GSK3B and BTRC:CUL1-mediated-degradation of NFE2L2"/>
</dbReference>
<dbReference type="Reactome" id="R-DME-983168">
    <property type="pathway name" value="Antigen processing: Ubiquitination &amp; Proteasome degradation"/>
</dbReference>
<dbReference type="Reactome" id="R-DME-9907900">
    <property type="pathway name" value="Proteasome assembly"/>
</dbReference>
<dbReference type="SignaLink" id="P18053"/>
<dbReference type="BioGRID-ORCS" id="37378">
    <property type="hits" value="0 hits in 1 CRISPR screen"/>
</dbReference>
<dbReference type="ChiTaRS" id="Prosalpha3">
    <property type="organism name" value="fly"/>
</dbReference>
<dbReference type="GenomeRNAi" id="37378"/>
<dbReference type="PRO" id="PR:P18053"/>
<dbReference type="Proteomes" id="UP000000803">
    <property type="component" value="Chromosome 2R"/>
</dbReference>
<dbReference type="Bgee" id="FBgn0261394">
    <property type="expression patterns" value="Expressed in spermatocyte in testis and 191 other cell types or tissues"/>
</dbReference>
<dbReference type="GO" id="GO:0005737">
    <property type="term" value="C:cytoplasm"/>
    <property type="evidence" value="ECO:0000314"/>
    <property type="project" value="FlyBase"/>
</dbReference>
<dbReference type="GO" id="GO:0005829">
    <property type="term" value="C:cytosol"/>
    <property type="evidence" value="ECO:0000318"/>
    <property type="project" value="GO_Central"/>
</dbReference>
<dbReference type="GO" id="GO:0005634">
    <property type="term" value="C:nucleus"/>
    <property type="evidence" value="ECO:0000314"/>
    <property type="project" value="FlyBase"/>
</dbReference>
<dbReference type="GO" id="GO:0000502">
    <property type="term" value="C:proteasome complex"/>
    <property type="evidence" value="ECO:0000314"/>
    <property type="project" value="FlyBase"/>
</dbReference>
<dbReference type="GO" id="GO:0005839">
    <property type="term" value="C:proteasome core complex"/>
    <property type="evidence" value="ECO:0000314"/>
    <property type="project" value="FlyBase"/>
</dbReference>
<dbReference type="GO" id="GO:0019773">
    <property type="term" value="C:proteasome core complex, alpha-subunit complex"/>
    <property type="evidence" value="ECO:0000250"/>
    <property type="project" value="UniProtKB"/>
</dbReference>
<dbReference type="GO" id="GO:0043161">
    <property type="term" value="P:proteasome-mediated ubiquitin-dependent protein catabolic process"/>
    <property type="evidence" value="ECO:0000318"/>
    <property type="project" value="GO_Central"/>
</dbReference>
<dbReference type="CDD" id="cd03752">
    <property type="entry name" value="proteasome_alpha_type_4"/>
    <property type="match status" value="1"/>
</dbReference>
<dbReference type="FunFam" id="3.60.20.10:FF:000022">
    <property type="entry name" value="Proteasome subunit alpha type"/>
    <property type="match status" value="1"/>
</dbReference>
<dbReference type="Gene3D" id="3.60.20.10">
    <property type="entry name" value="Glutamine Phosphoribosylpyrophosphate, subunit 1, domain 1"/>
    <property type="match status" value="1"/>
</dbReference>
<dbReference type="InterPro" id="IPR029055">
    <property type="entry name" value="Ntn_hydrolases_N"/>
</dbReference>
<dbReference type="InterPro" id="IPR050115">
    <property type="entry name" value="Proteasome_alpha"/>
</dbReference>
<dbReference type="InterPro" id="IPR023332">
    <property type="entry name" value="Proteasome_alpha-type"/>
</dbReference>
<dbReference type="InterPro" id="IPR000426">
    <property type="entry name" value="Proteasome_asu_N"/>
</dbReference>
<dbReference type="InterPro" id="IPR016050">
    <property type="entry name" value="Proteasome_bsu_CS"/>
</dbReference>
<dbReference type="InterPro" id="IPR001353">
    <property type="entry name" value="Proteasome_sua/b"/>
</dbReference>
<dbReference type="PANTHER" id="PTHR11599">
    <property type="entry name" value="PROTEASOME SUBUNIT ALPHA/BETA"/>
    <property type="match status" value="1"/>
</dbReference>
<dbReference type="Pfam" id="PF00227">
    <property type="entry name" value="Proteasome"/>
    <property type="match status" value="1"/>
</dbReference>
<dbReference type="Pfam" id="PF10584">
    <property type="entry name" value="Proteasome_A_N"/>
    <property type="match status" value="1"/>
</dbReference>
<dbReference type="SMART" id="SM00948">
    <property type="entry name" value="Proteasome_A_N"/>
    <property type="match status" value="1"/>
</dbReference>
<dbReference type="SUPFAM" id="SSF56235">
    <property type="entry name" value="N-terminal nucleophile aminohydrolases (Ntn hydrolases)"/>
    <property type="match status" value="1"/>
</dbReference>
<dbReference type="PROSITE" id="PS00388">
    <property type="entry name" value="PROTEASOME_ALPHA_1"/>
    <property type="match status" value="1"/>
</dbReference>
<dbReference type="PROSITE" id="PS51475">
    <property type="entry name" value="PROTEASOME_ALPHA_2"/>
    <property type="match status" value="1"/>
</dbReference>
<reference key="1">
    <citation type="journal article" date="1990" name="Nucleic Acids Res.">
        <title>The Drosophila PROS-29 gene is a new member of the PROS-gene family.</title>
        <authorList>
            <person name="Haass C."/>
            <person name="Pesold-Hurt B."/>
            <person name="Kloetzel P.-M."/>
        </authorList>
    </citation>
    <scope>NUCLEOTIDE SEQUENCE [MRNA]</scope>
    <source>
        <strain>Oregon-R</strain>
    </source>
</reference>
<reference key="2">
    <citation type="journal article" date="2000" name="Science">
        <title>The genome sequence of Drosophila melanogaster.</title>
        <authorList>
            <person name="Adams M.D."/>
            <person name="Celniker S.E."/>
            <person name="Holt R.A."/>
            <person name="Evans C.A."/>
            <person name="Gocayne J.D."/>
            <person name="Amanatides P.G."/>
            <person name="Scherer S.E."/>
            <person name="Li P.W."/>
            <person name="Hoskins R.A."/>
            <person name="Galle R.F."/>
            <person name="George R.A."/>
            <person name="Lewis S.E."/>
            <person name="Richards S."/>
            <person name="Ashburner M."/>
            <person name="Henderson S.N."/>
            <person name="Sutton G.G."/>
            <person name="Wortman J.R."/>
            <person name="Yandell M.D."/>
            <person name="Zhang Q."/>
            <person name="Chen L.X."/>
            <person name="Brandon R.C."/>
            <person name="Rogers Y.-H.C."/>
            <person name="Blazej R.G."/>
            <person name="Champe M."/>
            <person name="Pfeiffer B.D."/>
            <person name="Wan K.H."/>
            <person name="Doyle C."/>
            <person name="Baxter E.G."/>
            <person name="Helt G."/>
            <person name="Nelson C.R."/>
            <person name="Miklos G.L.G."/>
            <person name="Abril J.F."/>
            <person name="Agbayani A."/>
            <person name="An H.-J."/>
            <person name="Andrews-Pfannkoch C."/>
            <person name="Baldwin D."/>
            <person name="Ballew R.M."/>
            <person name="Basu A."/>
            <person name="Baxendale J."/>
            <person name="Bayraktaroglu L."/>
            <person name="Beasley E.M."/>
            <person name="Beeson K.Y."/>
            <person name="Benos P.V."/>
            <person name="Berman B.P."/>
            <person name="Bhandari D."/>
            <person name="Bolshakov S."/>
            <person name="Borkova D."/>
            <person name="Botchan M.R."/>
            <person name="Bouck J."/>
            <person name="Brokstein P."/>
            <person name="Brottier P."/>
            <person name="Burtis K.C."/>
            <person name="Busam D.A."/>
            <person name="Butler H."/>
            <person name="Cadieu E."/>
            <person name="Center A."/>
            <person name="Chandra I."/>
            <person name="Cherry J.M."/>
            <person name="Cawley S."/>
            <person name="Dahlke C."/>
            <person name="Davenport L.B."/>
            <person name="Davies P."/>
            <person name="de Pablos B."/>
            <person name="Delcher A."/>
            <person name="Deng Z."/>
            <person name="Mays A.D."/>
            <person name="Dew I."/>
            <person name="Dietz S.M."/>
            <person name="Dodson K."/>
            <person name="Doup L.E."/>
            <person name="Downes M."/>
            <person name="Dugan-Rocha S."/>
            <person name="Dunkov B.C."/>
            <person name="Dunn P."/>
            <person name="Durbin K.J."/>
            <person name="Evangelista C.C."/>
            <person name="Ferraz C."/>
            <person name="Ferriera S."/>
            <person name="Fleischmann W."/>
            <person name="Fosler C."/>
            <person name="Gabrielian A.E."/>
            <person name="Garg N.S."/>
            <person name="Gelbart W.M."/>
            <person name="Glasser K."/>
            <person name="Glodek A."/>
            <person name="Gong F."/>
            <person name="Gorrell J.H."/>
            <person name="Gu Z."/>
            <person name="Guan P."/>
            <person name="Harris M."/>
            <person name="Harris N.L."/>
            <person name="Harvey D.A."/>
            <person name="Heiman T.J."/>
            <person name="Hernandez J.R."/>
            <person name="Houck J."/>
            <person name="Hostin D."/>
            <person name="Houston K.A."/>
            <person name="Howland T.J."/>
            <person name="Wei M.-H."/>
            <person name="Ibegwam C."/>
            <person name="Jalali M."/>
            <person name="Kalush F."/>
            <person name="Karpen G.H."/>
            <person name="Ke Z."/>
            <person name="Kennison J.A."/>
            <person name="Ketchum K.A."/>
            <person name="Kimmel B.E."/>
            <person name="Kodira C.D."/>
            <person name="Kraft C.L."/>
            <person name="Kravitz S."/>
            <person name="Kulp D."/>
            <person name="Lai Z."/>
            <person name="Lasko P."/>
            <person name="Lei Y."/>
            <person name="Levitsky A.A."/>
            <person name="Li J.H."/>
            <person name="Li Z."/>
            <person name="Liang Y."/>
            <person name="Lin X."/>
            <person name="Liu X."/>
            <person name="Mattei B."/>
            <person name="McIntosh T.C."/>
            <person name="McLeod M.P."/>
            <person name="McPherson D."/>
            <person name="Merkulov G."/>
            <person name="Milshina N.V."/>
            <person name="Mobarry C."/>
            <person name="Morris J."/>
            <person name="Moshrefi A."/>
            <person name="Mount S.M."/>
            <person name="Moy M."/>
            <person name="Murphy B."/>
            <person name="Murphy L."/>
            <person name="Muzny D.M."/>
            <person name="Nelson D.L."/>
            <person name="Nelson D.R."/>
            <person name="Nelson K.A."/>
            <person name="Nixon K."/>
            <person name="Nusskern D.R."/>
            <person name="Pacleb J.M."/>
            <person name="Palazzolo M."/>
            <person name="Pittman G.S."/>
            <person name="Pan S."/>
            <person name="Pollard J."/>
            <person name="Puri V."/>
            <person name="Reese M.G."/>
            <person name="Reinert K."/>
            <person name="Remington K."/>
            <person name="Saunders R.D.C."/>
            <person name="Scheeler F."/>
            <person name="Shen H."/>
            <person name="Shue B.C."/>
            <person name="Siden-Kiamos I."/>
            <person name="Simpson M."/>
            <person name="Skupski M.P."/>
            <person name="Smith T.J."/>
            <person name="Spier E."/>
            <person name="Spradling A.C."/>
            <person name="Stapleton M."/>
            <person name="Strong R."/>
            <person name="Sun E."/>
            <person name="Svirskas R."/>
            <person name="Tector C."/>
            <person name="Turner R."/>
            <person name="Venter E."/>
            <person name="Wang A.H."/>
            <person name="Wang X."/>
            <person name="Wang Z.-Y."/>
            <person name="Wassarman D.A."/>
            <person name="Weinstock G.M."/>
            <person name="Weissenbach J."/>
            <person name="Williams S.M."/>
            <person name="Woodage T."/>
            <person name="Worley K.C."/>
            <person name="Wu D."/>
            <person name="Yang S."/>
            <person name="Yao Q.A."/>
            <person name="Ye J."/>
            <person name="Yeh R.-F."/>
            <person name="Zaveri J.S."/>
            <person name="Zhan M."/>
            <person name="Zhang G."/>
            <person name="Zhao Q."/>
            <person name="Zheng L."/>
            <person name="Zheng X.H."/>
            <person name="Zhong F.N."/>
            <person name="Zhong W."/>
            <person name="Zhou X."/>
            <person name="Zhu S.C."/>
            <person name="Zhu X."/>
            <person name="Smith H.O."/>
            <person name="Gibbs R.A."/>
            <person name="Myers E.W."/>
            <person name="Rubin G.M."/>
            <person name="Venter J.C."/>
        </authorList>
    </citation>
    <scope>NUCLEOTIDE SEQUENCE [LARGE SCALE GENOMIC DNA]</scope>
    <source>
        <strain>Berkeley</strain>
    </source>
</reference>
<reference key="3">
    <citation type="journal article" date="2002" name="Genome Biol.">
        <title>Annotation of the Drosophila melanogaster euchromatic genome: a systematic review.</title>
        <authorList>
            <person name="Misra S."/>
            <person name="Crosby M.A."/>
            <person name="Mungall C.J."/>
            <person name="Matthews B.B."/>
            <person name="Campbell K.S."/>
            <person name="Hradecky P."/>
            <person name="Huang Y."/>
            <person name="Kaminker J.S."/>
            <person name="Millburn G.H."/>
            <person name="Prochnik S.E."/>
            <person name="Smith C.D."/>
            <person name="Tupy J.L."/>
            <person name="Whitfield E.J."/>
            <person name="Bayraktaroglu L."/>
            <person name="Berman B.P."/>
            <person name="Bettencourt B.R."/>
            <person name="Celniker S.E."/>
            <person name="de Grey A.D.N.J."/>
            <person name="Drysdale R.A."/>
            <person name="Harris N.L."/>
            <person name="Richter J."/>
            <person name="Russo S."/>
            <person name="Schroeder A.J."/>
            <person name="Shu S.Q."/>
            <person name="Stapleton M."/>
            <person name="Yamada C."/>
            <person name="Ashburner M."/>
            <person name="Gelbart W.M."/>
            <person name="Rubin G.M."/>
            <person name="Lewis S.E."/>
        </authorList>
    </citation>
    <scope>GENOME REANNOTATION</scope>
    <source>
        <strain>Berkeley</strain>
    </source>
</reference>
<reference key="4">
    <citation type="journal article" date="2002" name="Genome Biol.">
        <title>A Drosophila full-length cDNA resource.</title>
        <authorList>
            <person name="Stapleton M."/>
            <person name="Carlson J.W."/>
            <person name="Brokstein P."/>
            <person name="Yu C."/>
            <person name="Champe M."/>
            <person name="George R.A."/>
            <person name="Guarin H."/>
            <person name="Kronmiller B."/>
            <person name="Pacleb J.M."/>
            <person name="Park S."/>
            <person name="Wan K.H."/>
            <person name="Rubin G.M."/>
            <person name="Celniker S.E."/>
        </authorList>
    </citation>
    <scope>NUCLEOTIDE SEQUENCE [LARGE SCALE MRNA]</scope>
    <source>
        <strain>Berkeley</strain>
        <tissue>Embryo</tissue>
    </source>
</reference>
<reference key="5">
    <citation type="journal article" date="2013" name="Cell">
        <title>Proteasome regulation by ADP-ribosylation.</title>
        <authorList>
            <person name="Cho-Park P.F."/>
            <person name="Steller H."/>
        </authorList>
    </citation>
    <scope>INTERACTION WITH PI31</scope>
</reference>
<name>PSA4_DROME</name>
<keyword id="KW-0963">Cytoplasm</keyword>
<keyword id="KW-0539">Nucleus</keyword>
<keyword id="KW-0647">Proteasome</keyword>
<keyword id="KW-1185">Reference proteome</keyword>
<comment type="function">
    <text>The proteasome is a multicatalytic proteinase complex which is characterized by its ability to cleave peptides with Arg, Phe, Tyr, Leu, and Glu adjacent to the leaving group at neutral or slightly basic pH. The proteasome has an ATP-dependent proteolytic activity.</text>
</comment>
<comment type="subunit">
    <text evidence="1 3">The 26S proteasome consists of a 20S proteasome core and two 19S regulatory subunits. The 20S proteasome core is composed of 28 subunits that are arranged in four stacked rings, resulting in a barrel-shaped structure. The two end rings are each formed by seven alpha subunits, and the two central rings are each formed by seven beta subunits. The catalytic chamber with the active sites is on the inside of the barrel (By similarity). Interacts with PI31.</text>
</comment>
<comment type="interaction">
    <interactant intactId="EBI-138951">
        <id>P18053</id>
    </interactant>
    <interactant intactId="EBI-144377">
        <id>Q9V637</id>
        <label>PI31</label>
    </interactant>
    <organismsDiffer>false</organismsDiffer>
    <experiments>2</experiments>
</comment>
<comment type="interaction">
    <interactant intactId="EBI-138951">
        <id>P18053</id>
    </interactant>
    <interactant intactId="EBI-98978">
        <id>P40301</id>
        <label>Prosalpha2</label>
    </interactant>
    <organismsDiffer>false</organismsDiffer>
    <experiments>4</experiments>
</comment>
<comment type="subcellular location">
    <subcellularLocation>
        <location evidence="1">Cytoplasm</location>
    </subcellularLocation>
    <subcellularLocation>
        <location evidence="1">Nucleus</location>
    </subcellularLocation>
</comment>
<comment type="similarity">
    <text evidence="2">Belongs to the peptidase T1A family.</text>
</comment>
<gene>
    <name type="primary">Prosalpha3</name>
    <name type="synonym">PROS-29</name>
    <name type="synonym">Pros29</name>
    <name type="ORF">CG9327</name>
</gene>
<proteinExistence type="evidence at protein level"/>
<sequence length="264" mass="29412">MARRYDSRTTIFSPEGRLYQVEYAMEAISHAGTCLGILAEDGILLAAECRSTNKLLDSAIPSEKIYRLNDNMVCSVAGITSDANVLTSELRLIAQRYQFSYGEVIPCEQLVSHLCDIKQAYTQYGGKRPFGVSLLYMGWDNKYGYQLYQSDPSGNYGGWKATCIGNNFGAAISMLKQELADKENVKLTLADAKDLAIKVLSMTLDTTKLTPEKVEMATLQRVDNKTVYSVLEKPDVEKLIEKYTKVQAEAEAAKKEKQAKQPTK</sequence>
<evidence type="ECO:0000250" key="1"/>
<evidence type="ECO:0000255" key="2">
    <source>
        <dbReference type="PROSITE-ProRule" id="PRU00808"/>
    </source>
</evidence>
<evidence type="ECO:0000269" key="3">
    <source>
    </source>
</evidence>
<evidence type="ECO:0000305" key="4"/>
<protein>
    <recommendedName>
        <fullName>Proteasome subunit alpha type-4</fullName>
    </recommendedName>
    <alternativeName>
        <fullName>PROS-Dm29</fullName>
    </alternativeName>
    <alternativeName>
        <fullName>Proteasome 29 kDa subunit</fullName>
    </alternativeName>
</protein>
<organism>
    <name type="scientific">Drosophila melanogaster</name>
    <name type="common">Fruit fly</name>
    <dbReference type="NCBI Taxonomy" id="7227"/>
    <lineage>
        <taxon>Eukaryota</taxon>
        <taxon>Metazoa</taxon>
        <taxon>Ecdysozoa</taxon>
        <taxon>Arthropoda</taxon>
        <taxon>Hexapoda</taxon>
        <taxon>Insecta</taxon>
        <taxon>Pterygota</taxon>
        <taxon>Neoptera</taxon>
        <taxon>Endopterygota</taxon>
        <taxon>Diptera</taxon>
        <taxon>Brachycera</taxon>
        <taxon>Muscomorpha</taxon>
        <taxon>Ephydroidea</taxon>
        <taxon>Drosophilidae</taxon>
        <taxon>Drosophila</taxon>
        <taxon>Sophophora</taxon>
    </lineage>
</organism>